<evidence type="ECO:0000250" key="1">
    <source>
        <dbReference type="UniProtKB" id="O88954"/>
    </source>
</evidence>
<evidence type="ECO:0000250" key="2">
    <source>
        <dbReference type="UniProtKB" id="Q13368"/>
    </source>
</evidence>
<evidence type="ECO:0000255" key="3">
    <source>
        <dbReference type="PROSITE-ProRule" id="PRU00100"/>
    </source>
</evidence>
<evidence type="ECO:0000255" key="4">
    <source>
        <dbReference type="PROSITE-ProRule" id="PRU00143"/>
    </source>
</evidence>
<evidence type="ECO:0000255" key="5">
    <source>
        <dbReference type="PROSITE-ProRule" id="PRU00192"/>
    </source>
</evidence>
<evidence type="ECO:0000255" key="6">
    <source>
        <dbReference type="PROSITE-ProRule" id="PRU00365"/>
    </source>
</evidence>
<evidence type="ECO:0000269" key="7">
    <source>
    </source>
</evidence>
<evidence type="ECO:0000269" key="8">
    <source>
    </source>
</evidence>
<evidence type="ECO:0000269" key="9">
    <source>
    </source>
</evidence>
<evidence type="ECO:0000269" key="10">
    <source>
    </source>
</evidence>
<evidence type="ECO:0000269" key="11">
    <source>
    </source>
</evidence>
<evidence type="ECO:0000269" key="12">
    <source>
    </source>
</evidence>
<evidence type="ECO:0000303" key="13">
    <source>
    </source>
</evidence>
<evidence type="ECO:0000305" key="14"/>
<evidence type="ECO:0000312" key="15">
    <source>
        <dbReference type="MGI" id="MGI:1328354"/>
    </source>
</evidence>
<name>MPP3_MOUSE</name>
<comment type="function">
    <text evidence="2 10 11 12">Participates in cell spreading through the phosphoinositide-3-kinase (PI3K) pathway by connecting CADM1 to DLG1 and the regulatory subunit of phosphoinositide-3-kinase (PI3K) (By similarity). Stabilizes HTR2C at the plasma membrane and prevents its desensitization (PubMed:16914526). May participates in the maintenance of adherens junctions (PubMed:23658188, PubMed:23893895).</text>
</comment>
<comment type="subunit">
    <text evidence="2 7 8 9 10">Interacts with HTR2C; this interaction stabilizes the receptor at the plasma membrane and prevents the desensitization of the HTR2C receptor-mediated calcium response (PubMed:14988405, PubMed:16914526). Interacts with HTR2A (PubMed:14988405). Interacts with HTR4 (PubMed:15466885). Interacts (via PDZ domain) with CADM1 (via C-terminus)Interacts (via PDZ domain) with CADM1; this interaction connects CADM1 with DLG1 (By similarity). Interacts (via Guanylate kinase-like domain) with PALS1 (PubMed:16519681). Interacts with DLG1 (via N-terminus); this interaction connects CADM1 with DLG1 and links CADM1 with the regulatory subunit of phosphoinositide-3-kinase (PI3K) by forming a multiprotein complex and participates in cell spreading (PubMed:16519681).</text>
</comment>
<comment type="subcellular location">
    <subcellularLocation>
        <location evidence="11 12">Apical cell membrane</location>
    </subcellularLocation>
    <subcellularLocation>
        <location evidence="2">Cell membrane</location>
    </subcellularLocation>
    <subcellularLocation>
        <location evidence="2">Cell junction</location>
        <location evidence="2">Adherens junction</location>
    </subcellularLocation>
    <text evidence="2 11 12">Localized in apical villi of Mueller glia cells (PubMed:23893895). Localized at the apical membrane in the developing cortex and colocalized with apical proteins and adherens junction proteins (PubMed:23658188). Localized at the outer limiting membrane (OLM), and outer plexiform (OPL) of retina (By similarity).</text>
</comment>
<comment type="tissue specificity">
    <text>Expressed in brain, skeletal muscle, testis, kidney, and lung.</text>
</comment>
<comment type="developmental stage">
    <text evidence="11">Expressed in E12.5 dorsal telencephalon in the developing cortex.</text>
</comment>
<comment type="disruption phenotype">
    <text evidence="11 12">Conditional knockout mice Mpp3 in retina develop late onset retinal degeneration, with sporadic foci of rosette formation in the central part of the retina which is accelerated by exposure to moderate levels of white light (PubMed:23893895). Conditional knockout mice Mpp3 during cortical development result in a gradual loss of the apical complex proteins and a disruption of adherens junctions (PubMed:23658188).</text>
</comment>
<comment type="similarity">
    <text evidence="14">Belongs to the MAGUK family.</text>
</comment>
<gene>
    <name evidence="15" type="primary">Mpp3</name>
    <name evidence="13" type="synonym">Dlgh3</name>
</gene>
<reference key="1">
    <citation type="journal article" date="1998" name="Biochim. Biophys. Acta">
        <title>cDNA sequence and chromosomal localization of mouse Dlgh3 gene adjacent to the BRCA1 tumor suppressor locus.</title>
        <authorList>
            <person name="Lin L."/>
            <person name="Peters L.L."/>
            <person name="Ciciotte S.L."/>
            <person name="Chishti A.H."/>
        </authorList>
    </citation>
    <scope>NUCLEOTIDE SEQUENCE [MRNA]</scope>
    <source>
        <strain>BALB/cJ</strain>
        <tissue>Brain</tissue>
    </source>
</reference>
<reference key="2">
    <citation type="journal article" date="2009" name="PLoS Biol.">
        <title>Lineage-specific biology revealed by a finished genome assembly of the mouse.</title>
        <authorList>
            <person name="Church D.M."/>
            <person name="Goodstadt L."/>
            <person name="Hillier L.W."/>
            <person name="Zody M.C."/>
            <person name="Goldstein S."/>
            <person name="She X."/>
            <person name="Bult C.J."/>
            <person name="Agarwala R."/>
            <person name="Cherry J.L."/>
            <person name="DiCuccio M."/>
            <person name="Hlavina W."/>
            <person name="Kapustin Y."/>
            <person name="Meric P."/>
            <person name="Maglott D."/>
            <person name="Birtle Z."/>
            <person name="Marques A.C."/>
            <person name="Graves T."/>
            <person name="Zhou S."/>
            <person name="Teague B."/>
            <person name="Potamousis K."/>
            <person name="Churas C."/>
            <person name="Place M."/>
            <person name="Herschleb J."/>
            <person name="Runnheim R."/>
            <person name="Forrest D."/>
            <person name="Amos-Landgraf J."/>
            <person name="Schwartz D.C."/>
            <person name="Cheng Z."/>
            <person name="Lindblad-Toh K."/>
            <person name="Eichler E.E."/>
            <person name="Ponting C.P."/>
        </authorList>
    </citation>
    <scope>NUCLEOTIDE SEQUENCE [LARGE SCALE GENOMIC DNA]</scope>
    <source>
        <strain>C57BL/6J</strain>
    </source>
</reference>
<reference key="3">
    <citation type="journal article" date="2004" name="J. Biol. Chem.">
        <title>The serotonin 5-HT2A and 5-HT2C receptors interact with specific sets of PDZ proteins.</title>
        <authorList>
            <person name="Becamel C."/>
            <person name="Gavarini S."/>
            <person name="Chanrion B."/>
            <person name="Alonso G."/>
            <person name="Galeotti N."/>
            <person name="Dumuis A."/>
            <person name="Bockaert J."/>
            <person name="Marin P."/>
        </authorList>
    </citation>
    <scope>INTERACTION WITH HTR2A AND HTR2C</scope>
</reference>
<reference key="4">
    <citation type="journal article" date="2004" name="J. Cell Sci.">
        <title>New sorting nexin (SNX27) and NHERF specifically interact with the 5-HT4a receptor splice variant: roles in receptor targeting.</title>
        <authorList>
            <person name="Joubert L."/>
            <person name="Hanson B."/>
            <person name="Barthet G."/>
            <person name="Sebben M."/>
            <person name="Claeysen S."/>
            <person name="Hong W."/>
            <person name="Marin P."/>
            <person name="Dumuis A."/>
            <person name="Bockaert J."/>
        </authorList>
    </citation>
    <scope>INTERACTION WITH HTR4</scope>
</reference>
<reference key="5">
    <citation type="journal article" date="2006" name="FEBS J.">
        <title>MPP3 is recruited to the MPP5 protein scaffold at the retinal outer limiting membrane.</title>
        <authorList>
            <person name="Kantardzhieva A."/>
            <person name="Alexeeva S."/>
            <person name="Versteeg I."/>
            <person name="Wijnholds J."/>
        </authorList>
    </citation>
    <scope>INTERACTION WITH PALS1 AND DLG1</scope>
    <source>
        <tissue>Retina</tissue>
    </source>
</reference>
<reference key="6">
    <citation type="journal article" date="2006" name="Mol. Biol. Cell">
        <title>Opposite effects of PSD-95 and MPP3 PDZ proteins on serotonin 5-hydroxytryptamine2C receptor desensitization and membrane stability.</title>
        <authorList>
            <person name="Gavarini S."/>
            <person name="Becamel C."/>
            <person name="Altier C."/>
            <person name="Lory P."/>
            <person name="Poncet J."/>
            <person name="Wijnholds J."/>
            <person name="Bockaert J."/>
            <person name="Marin P."/>
        </authorList>
    </citation>
    <scope>FUNCTION</scope>
    <scope>INTERACTION WITH HTR2C</scope>
</reference>
<reference key="7">
    <citation type="journal article" date="2010" name="Cell">
        <title>A tissue-specific atlas of mouse protein phosphorylation and expression.</title>
        <authorList>
            <person name="Huttlin E.L."/>
            <person name="Jedrychowski M.P."/>
            <person name="Elias J.E."/>
            <person name="Goswami T."/>
            <person name="Rad R."/>
            <person name="Beausoleil S.A."/>
            <person name="Villen J."/>
            <person name="Haas W."/>
            <person name="Sowa M.E."/>
            <person name="Gygi S.P."/>
        </authorList>
    </citation>
    <scope>IDENTIFICATION BY MASS SPECTROMETRY [LARGE SCALE ANALYSIS]</scope>
    <source>
        <tissue>Brain</tissue>
    </source>
</reference>
<reference key="8">
    <citation type="journal article" date="2013" name="Glia">
        <title>MPP3 regulates levels of PALS1 and adhesion between photoreceptors and Mueller cells.</title>
        <authorList>
            <person name="Dudok J.J."/>
            <person name="Sanz A.S."/>
            <person name="Lundvig D.M."/>
            <person name="Sothilingam V."/>
            <person name="Garcia Garrido M."/>
            <person name="Klooster J."/>
            <person name="Seeliger M.W."/>
            <person name="Wijnholds J."/>
        </authorList>
    </citation>
    <scope>FUNCTION</scope>
    <scope>SUBCELLULAR LOCATION</scope>
    <scope>DISRUPTION PHENOTYPE</scope>
</reference>
<reference key="9">
    <citation type="journal article" date="2013" name="J. Neurosci.">
        <title>MPP3 is required for maintenance of the apical junctional complex, neuronal migration, and stratification in the developing cortex.</title>
        <authorList>
            <person name="Dudok J.J."/>
            <person name="Sanz A.S."/>
            <person name="Lundvig D.M."/>
            <person name="Wijnholds J."/>
        </authorList>
    </citation>
    <scope>FUNCTION</scope>
    <scope>SUBCELLULAR LOCATION</scope>
    <scope>DEVELOPMENTAL STAGE</scope>
    <scope>DISRUPTION PHENOTYPE</scope>
</reference>
<feature type="chain" id="PRO_0000094576" description="MAGUK p55 subfamily member 3">
    <location>
        <begin position="1"/>
        <end position="568"/>
    </location>
</feature>
<feature type="domain" description="L27 1" evidence="6">
    <location>
        <begin position="6"/>
        <end position="60"/>
    </location>
</feature>
<feature type="domain" description="L27 2" evidence="6">
    <location>
        <begin position="61"/>
        <end position="118"/>
    </location>
</feature>
<feature type="domain" description="PDZ" evidence="4">
    <location>
        <begin position="137"/>
        <end position="218"/>
    </location>
</feature>
<feature type="domain" description="SH3" evidence="5">
    <location>
        <begin position="226"/>
        <end position="296"/>
    </location>
</feature>
<feature type="domain" description="Guanylate kinase-like" evidence="3">
    <location>
        <begin position="385"/>
        <end position="568"/>
    </location>
</feature>
<feature type="modified residue" description="Phosphoserine" evidence="1">
    <location>
        <position position="307"/>
    </location>
</feature>
<feature type="sequence conflict" description="In Ref. 1; AAD12762." evidence="14" ref="1">
    <original>V</original>
    <variation>I</variation>
    <location>
        <position position="3"/>
    </location>
</feature>
<feature type="sequence conflict" description="In Ref. 1; AAD12762." evidence="14" ref="1">
    <original>G</original>
    <variation>E</variation>
    <location>
        <position position="329"/>
    </location>
</feature>
<feature type="sequence conflict" description="In Ref. 1; AAD12762." evidence="14" ref="1">
    <original>R</original>
    <variation>I</variation>
    <location>
        <position position="429"/>
    </location>
</feature>
<feature type="sequence conflict" description="In Ref. 1; AAD12762." evidence="14" ref="1">
    <original>K</original>
    <variation>R</variation>
    <location>
        <position position="450"/>
    </location>
</feature>
<accession>O88910</accession>
<accession>E9Q5S2</accession>
<organism>
    <name type="scientific">Mus musculus</name>
    <name type="common">Mouse</name>
    <dbReference type="NCBI Taxonomy" id="10090"/>
    <lineage>
        <taxon>Eukaryota</taxon>
        <taxon>Metazoa</taxon>
        <taxon>Chordata</taxon>
        <taxon>Craniata</taxon>
        <taxon>Vertebrata</taxon>
        <taxon>Euteleostomi</taxon>
        <taxon>Mammalia</taxon>
        <taxon>Eutheria</taxon>
        <taxon>Euarchontoglires</taxon>
        <taxon>Glires</taxon>
        <taxon>Rodentia</taxon>
        <taxon>Myomorpha</taxon>
        <taxon>Muroidea</taxon>
        <taxon>Muridae</taxon>
        <taxon>Murinae</taxon>
        <taxon>Mus</taxon>
        <taxon>Mus</taxon>
    </lineage>
</organism>
<protein>
    <recommendedName>
        <fullName evidence="14">MAGUK p55 subfamily member 3</fullName>
    </recommendedName>
    <alternativeName>
        <fullName>Discs large homolog 3</fullName>
    </alternativeName>
    <alternativeName>
        <fullName>Protein MPP3</fullName>
    </alternativeName>
</protein>
<proteinExistence type="evidence at protein level"/>
<dbReference type="EMBL" id="AF079366">
    <property type="protein sequence ID" value="AAD12762.1"/>
    <property type="molecule type" value="mRNA"/>
</dbReference>
<dbReference type="EMBL" id="AL591145">
    <property type="status" value="NOT_ANNOTATED_CDS"/>
    <property type="molecule type" value="Genomic_DNA"/>
</dbReference>
<dbReference type="SMR" id="O88910"/>
<dbReference type="CORUM" id="O88910"/>
<dbReference type="FunCoup" id="O88910">
    <property type="interactions" value="150"/>
</dbReference>
<dbReference type="STRING" id="10090.ENSMUSP00000102786"/>
<dbReference type="GlyGen" id="O88910">
    <property type="glycosylation" value="1 site, 1 O-linked glycan (1 site)"/>
</dbReference>
<dbReference type="iPTMnet" id="O88910"/>
<dbReference type="PhosphoSitePlus" id="O88910"/>
<dbReference type="SwissPalm" id="O88910"/>
<dbReference type="PaxDb" id="10090-ENSMUSP00000055469"/>
<dbReference type="PeptideAtlas" id="O88910"/>
<dbReference type="ProteomicsDB" id="291489"/>
<dbReference type="AGR" id="MGI:1328354"/>
<dbReference type="MGI" id="MGI:1328354">
    <property type="gene designation" value="Mpp3"/>
</dbReference>
<dbReference type="eggNOG" id="KOG0609">
    <property type="taxonomic scope" value="Eukaryota"/>
</dbReference>
<dbReference type="InParanoid" id="O88910"/>
<dbReference type="CD-CODE" id="CE726F99">
    <property type="entry name" value="Postsynaptic density"/>
</dbReference>
<dbReference type="ChiTaRS" id="Mpp3">
    <property type="organism name" value="mouse"/>
</dbReference>
<dbReference type="PRO" id="PR:O88910"/>
<dbReference type="Proteomes" id="UP000000589">
    <property type="component" value="Unplaced"/>
</dbReference>
<dbReference type="RNAct" id="O88910">
    <property type="molecule type" value="protein"/>
</dbReference>
<dbReference type="GO" id="GO:0005912">
    <property type="term" value="C:adherens junction"/>
    <property type="evidence" value="ECO:0000315"/>
    <property type="project" value="UniProtKB"/>
</dbReference>
<dbReference type="GO" id="GO:0016324">
    <property type="term" value="C:apical plasma membrane"/>
    <property type="evidence" value="ECO:0000314"/>
    <property type="project" value="UniProtKB"/>
</dbReference>
<dbReference type="GO" id="GO:0005886">
    <property type="term" value="C:plasma membrane"/>
    <property type="evidence" value="ECO:0000250"/>
    <property type="project" value="UniProtKB"/>
</dbReference>
<dbReference type="CDD" id="cd00071">
    <property type="entry name" value="GMPK"/>
    <property type="match status" value="1"/>
</dbReference>
<dbReference type="CDD" id="cd06799">
    <property type="entry name" value="PDZ_MPP3-MPP4-MPP7-like"/>
    <property type="match status" value="1"/>
</dbReference>
<dbReference type="CDD" id="cd12039">
    <property type="entry name" value="SH3_MPP3"/>
    <property type="match status" value="1"/>
</dbReference>
<dbReference type="FunFam" id="3.30.63.10:FF:000002">
    <property type="entry name" value="Guanylate kinase 1"/>
    <property type="match status" value="1"/>
</dbReference>
<dbReference type="FunFam" id="2.30.30.40:FF:000215">
    <property type="entry name" value="MAGUK p55 subfamily member 3"/>
    <property type="match status" value="1"/>
</dbReference>
<dbReference type="FunFam" id="2.30.42.10:FF:000046">
    <property type="entry name" value="MAGUK p55 subfamily member 7"/>
    <property type="match status" value="1"/>
</dbReference>
<dbReference type="Gene3D" id="2.30.42.10">
    <property type="match status" value="1"/>
</dbReference>
<dbReference type="Gene3D" id="1.10.287.650">
    <property type="entry name" value="L27 domain"/>
    <property type="match status" value="1"/>
</dbReference>
<dbReference type="Gene3D" id="3.40.50.300">
    <property type="entry name" value="P-loop containing nucleotide triphosphate hydrolases"/>
    <property type="match status" value="1"/>
</dbReference>
<dbReference type="Gene3D" id="2.30.30.40">
    <property type="entry name" value="SH3 Domains"/>
    <property type="match status" value="1"/>
</dbReference>
<dbReference type="InterPro" id="IPR008145">
    <property type="entry name" value="GK/Ca_channel_bsu"/>
</dbReference>
<dbReference type="InterPro" id="IPR008144">
    <property type="entry name" value="Guanylate_kin-like_dom"/>
</dbReference>
<dbReference type="InterPro" id="IPR020590">
    <property type="entry name" value="Guanylate_kinase_CS"/>
</dbReference>
<dbReference type="InterPro" id="IPR014775">
    <property type="entry name" value="L27_C"/>
</dbReference>
<dbReference type="InterPro" id="IPR004172">
    <property type="entry name" value="L27_dom"/>
</dbReference>
<dbReference type="InterPro" id="IPR036892">
    <property type="entry name" value="L27_dom_sf"/>
</dbReference>
<dbReference type="InterPro" id="IPR050716">
    <property type="entry name" value="MAGUK"/>
</dbReference>
<dbReference type="InterPro" id="IPR035604">
    <property type="entry name" value="MPP3_SH3"/>
</dbReference>
<dbReference type="InterPro" id="IPR027417">
    <property type="entry name" value="P-loop_NTPase"/>
</dbReference>
<dbReference type="InterPro" id="IPR001478">
    <property type="entry name" value="PDZ"/>
</dbReference>
<dbReference type="InterPro" id="IPR036034">
    <property type="entry name" value="PDZ_sf"/>
</dbReference>
<dbReference type="InterPro" id="IPR036028">
    <property type="entry name" value="SH3-like_dom_sf"/>
</dbReference>
<dbReference type="InterPro" id="IPR001452">
    <property type="entry name" value="SH3_domain"/>
</dbReference>
<dbReference type="PANTHER" id="PTHR23122">
    <property type="entry name" value="MEMBRANE-ASSOCIATED GUANYLATE KINASE MAGUK"/>
    <property type="match status" value="1"/>
</dbReference>
<dbReference type="Pfam" id="PF00625">
    <property type="entry name" value="Guanylate_kin"/>
    <property type="match status" value="1"/>
</dbReference>
<dbReference type="Pfam" id="PF02828">
    <property type="entry name" value="L27"/>
    <property type="match status" value="2"/>
</dbReference>
<dbReference type="Pfam" id="PF00595">
    <property type="entry name" value="PDZ"/>
    <property type="match status" value="1"/>
</dbReference>
<dbReference type="Pfam" id="PF07653">
    <property type="entry name" value="SH3_2"/>
    <property type="match status" value="1"/>
</dbReference>
<dbReference type="SMART" id="SM00072">
    <property type="entry name" value="GuKc"/>
    <property type="match status" value="1"/>
</dbReference>
<dbReference type="SMART" id="SM00569">
    <property type="entry name" value="L27"/>
    <property type="match status" value="2"/>
</dbReference>
<dbReference type="SMART" id="SM00228">
    <property type="entry name" value="PDZ"/>
    <property type="match status" value="1"/>
</dbReference>
<dbReference type="SMART" id="SM00326">
    <property type="entry name" value="SH3"/>
    <property type="match status" value="1"/>
</dbReference>
<dbReference type="SUPFAM" id="SSF101288">
    <property type="entry name" value="L27 domain"/>
    <property type="match status" value="1"/>
</dbReference>
<dbReference type="SUPFAM" id="SSF52540">
    <property type="entry name" value="P-loop containing nucleoside triphosphate hydrolases"/>
    <property type="match status" value="1"/>
</dbReference>
<dbReference type="SUPFAM" id="SSF50156">
    <property type="entry name" value="PDZ domain-like"/>
    <property type="match status" value="1"/>
</dbReference>
<dbReference type="SUPFAM" id="SSF50044">
    <property type="entry name" value="SH3-domain"/>
    <property type="match status" value="1"/>
</dbReference>
<dbReference type="PROSITE" id="PS00856">
    <property type="entry name" value="GUANYLATE_KINASE_1"/>
    <property type="match status" value="1"/>
</dbReference>
<dbReference type="PROSITE" id="PS50052">
    <property type="entry name" value="GUANYLATE_KINASE_2"/>
    <property type="match status" value="1"/>
</dbReference>
<dbReference type="PROSITE" id="PS51022">
    <property type="entry name" value="L27"/>
    <property type="match status" value="2"/>
</dbReference>
<dbReference type="PROSITE" id="PS50106">
    <property type="entry name" value="PDZ"/>
    <property type="match status" value="1"/>
</dbReference>
<dbReference type="PROSITE" id="PS50002">
    <property type="entry name" value="SH3"/>
    <property type="match status" value="1"/>
</dbReference>
<sequence>MPVLSEDSGLHETLALLTSQLRPDSNHREEMGFLRDVFSEKSLSYLMKIHEKLRYYERQSPTPVLHSAMALAEDVMEELQAASVHSDERELLQLLSTPHLRAVLMVHDTVAQKNFDPVLPPLPDNIDEDFEEESVKIVRLVKNKEPLGATIRRDEHSGAVVVARIMRGGAADRSGLVHVGDELREVNGIAVLHKRPDEISQILAQSQGSITLKIIPATQEEDRFKDSKVFMRALFHYDPREDRAIPCQEAGLPFQRRQVLEVVSQDDPTWWQAKRVGDTNLRAGLIPSKQFQERRLSYRRTTGTLPSPQNFKKPPYDQPCDKETCDCDGYFKGHYVAGLRRSFRLGCRERLGGSQEAKVPTGAESQVLLTYEEVARYQHQPGERPRLVVLIGSLGAHLHELKQRVVAEDPQQFAVAVPHTTRPRKSHERDGVEYHFVSKQAFEADVHHNKFLEHGEYKENLYGTSLEAIQAVMAKNKVCLVDVEPEALRHLRTPEFKPYVIFVKPAIQERRKTPPVSPDSEDIASSLDEQQQEMAASAAFIDQHYGHLIDTVLVRQDLQEPAASSELS</sequence>
<keyword id="KW-0965">Cell junction</keyword>
<keyword id="KW-1003">Cell membrane</keyword>
<keyword id="KW-0472">Membrane</keyword>
<keyword id="KW-0597">Phosphoprotein</keyword>
<keyword id="KW-1185">Reference proteome</keyword>
<keyword id="KW-0677">Repeat</keyword>
<keyword id="KW-0728">SH3 domain</keyword>